<keyword id="KW-0067">ATP-binding</keyword>
<keyword id="KW-0963">Cytoplasm</keyword>
<keyword id="KW-0227">DNA damage</keyword>
<keyword id="KW-0234">DNA repair</keyword>
<keyword id="KW-0238">DNA-binding</keyword>
<keyword id="KW-0347">Helicase</keyword>
<keyword id="KW-0378">Hydrolase</keyword>
<keyword id="KW-0479">Metal-binding</keyword>
<keyword id="KW-0547">Nucleotide-binding</keyword>
<keyword id="KW-0539">Nucleus</keyword>
<keyword id="KW-1185">Reference proteome</keyword>
<keyword id="KW-0862">Zinc</keyword>
<keyword id="KW-0863">Zinc-finger</keyword>
<comment type="function">
    <text evidence="1">Probable helicase, member of the UBC2/RAD6 epistasis group. Functions with DNA repair protein RAD18 in error-free postreplication DNA repair. Involved in the maintenance of wild-type rates of instability of simple repetitive sequences such as poly(GT) repeats. Seems to be involved in maintaining a balance which acts in favor of error-prone non-homologous joining during DNA double-strand breaks repairs (By similarity).</text>
</comment>
<comment type="subcellular location">
    <subcellularLocation>
        <location evidence="1">Cytoplasm</location>
    </subcellularLocation>
    <subcellularLocation>
        <location evidence="1">Nucleus</location>
    </subcellularLocation>
</comment>
<comment type="similarity">
    <text evidence="6">Belongs to the SNF2/RAD54 helicase family.</text>
</comment>
<name>RAD5_YARLI</name>
<evidence type="ECO:0000250" key="1"/>
<evidence type="ECO:0000255" key="2">
    <source>
        <dbReference type="PROSITE-ProRule" id="PRU00175"/>
    </source>
</evidence>
<evidence type="ECO:0000255" key="3">
    <source>
        <dbReference type="PROSITE-ProRule" id="PRU00541"/>
    </source>
</evidence>
<evidence type="ECO:0000255" key="4">
    <source>
        <dbReference type="PROSITE-ProRule" id="PRU00542"/>
    </source>
</evidence>
<evidence type="ECO:0000256" key="5">
    <source>
        <dbReference type="SAM" id="MobiDB-lite"/>
    </source>
</evidence>
<evidence type="ECO:0000305" key="6"/>
<organism>
    <name type="scientific">Yarrowia lipolytica (strain CLIB 122 / E 150)</name>
    <name type="common">Yeast</name>
    <name type="synonym">Candida lipolytica</name>
    <dbReference type="NCBI Taxonomy" id="284591"/>
    <lineage>
        <taxon>Eukaryota</taxon>
        <taxon>Fungi</taxon>
        <taxon>Dikarya</taxon>
        <taxon>Ascomycota</taxon>
        <taxon>Saccharomycotina</taxon>
        <taxon>Dipodascomycetes</taxon>
        <taxon>Dipodascales</taxon>
        <taxon>Dipodascales incertae sedis</taxon>
        <taxon>Yarrowia</taxon>
    </lineage>
</organism>
<accession>Q6C2R8</accession>
<proteinExistence type="inferred from homology"/>
<feature type="chain" id="PRO_0000056129" description="DNA repair protein RAD5">
    <location>
        <begin position="1"/>
        <end position="1025"/>
    </location>
</feature>
<feature type="domain" description="Helicase ATP-binding" evidence="3">
    <location>
        <begin position="427"/>
        <end position="607"/>
    </location>
</feature>
<feature type="domain" description="Helicase C-terminal" evidence="4">
    <location>
        <begin position="860"/>
        <end position="1012"/>
    </location>
</feature>
<feature type="zinc finger region" description="RING-type" evidence="2">
    <location>
        <begin position="782"/>
        <end position="826"/>
    </location>
</feature>
<feature type="region of interest" description="Disordered" evidence="5">
    <location>
        <begin position="1"/>
        <end position="49"/>
    </location>
</feature>
<feature type="region of interest" description="Disordered" evidence="5">
    <location>
        <begin position="93"/>
        <end position="133"/>
    </location>
</feature>
<feature type="region of interest" description="Disordered" evidence="5">
    <location>
        <begin position="314"/>
        <end position="336"/>
    </location>
</feature>
<feature type="short sequence motif" description="DEAH box">
    <location>
        <begin position="558"/>
        <end position="561"/>
    </location>
</feature>
<feature type="compositionally biased region" description="Basic and acidic residues" evidence="5">
    <location>
        <begin position="1"/>
        <end position="12"/>
    </location>
</feature>
<feature type="compositionally biased region" description="Polar residues" evidence="5">
    <location>
        <begin position="37"/>
        <end position="49"/>
    </location>
</feature>
<feature type="compositionally biased region" description="Polar residues" evidence="5">
    <location>
        <begin position="113"/>
        <end position="127"/>
    </location>
</feature>
<feature type="compositionally biased region" description="Low complexity" evidence="5">
    <location>
        <begin position="317"/>
        <end position="328"/>
    </location>
</feature>
<feature type="binding site" evidence="3">
    <location>
        <begin position="440"/>
        <end position="447"/>
    </location>
    <ligand>
        <name>ATP</name>
        <dbReference type="ChEBI" id="CHEBI:30616"/>
    </ligand>
</feature>
<dbReference type="EC" id="3.6.4.-"/>
<dbReference type="EMBL" id="CR382132">
    <property type="protein sequence ID" value="CAG77851.1"/>
    <property type="molecule type" value="Genomic_DNA"/>
</dbReference>
<dbReference type="RefSeq" id="XP_505044.1">
    <property type="nucleotide sequence ID" value="XM_505044.1"/>
</dbReference>
<dbReference type="SMR" id="Q6C2R8"/>
<dbReference type="FunCoup" id="Q6C2R8">
    <property type="interactions" value="1060"/>
</dbReference>
<dbReference type="STRING" id="284591.Q6C2R8"/>
<dbReference type="EnsemblFungi" id="CAG77851">
    <property type="protein sequence ID" value="CAG77851"/>
    <property type="gene ID" value="YALI0_F05698g"/>
</dbReference>
<dbReference type="KEGG" id="yli:2907973"/>
<dbReference type="VEuPathDB" id="FungiDB:YALI0_F05698g"/>
<dbReference type="HOGENOM" id="CLU_000315_2_5_1"/>
<dbReference type="InParanoid" id="Q6C2R8"/>
<dbReference type="OMA" id="KVEPWSN"/>
<dbReference type="OrthoDB" id="118075at4891"/>
<dbReference type="Proteomes" id="UP000001300">
    <property type="component" value="Chromosome F"/>
</dbReference>
<dbReference type="GO" id="GO:0005737">
    <property type="term" value="C:cytoplasm"/>
    <property type="evidence" value="ECO:0007669"/>
    <property type="project" value="UniProtKB-SubCell"/>
</dbReference>
<dbReference type="GO" id="GO:0005634">
    <property type="term" value="C:nucleus"/>
    <property type="evidence" value="ECO:0000318"/>
    <property type="project" value="GO_Central"/>
</dbReference>
<dbReference type="GO" id="GO:0005524">
    <property type="term" value="F:ATP binding"/>
    <property type="evidence" value="ECO:0007669"/>
    <property type="project" value="UniProtKB-KW"/>
</dbReference>
<dbReference type="GO" id="GO:0008094">
    <property type="term" value="F:ATP-dependent activity, acting on DNA"/>
    <property type="evidence" value="ECO:0000318"/>
    <property type="project" value="GO_Central"/>
</dbReference>
<dbReference type="GO" id="GO:0003677">
    <property type="term" value="F:DNA binding"/>
    <property type="evidence" value="ECO:0007669"/>
    <property type="project" value="UniProtKB-KW"/>
</dbReference>
<dbReference type="GO" id="GO:0004386">
    <property type="term" value="F:helicase activity"/>
    <property type="evidence" value="ECO:0007669"/>
    <property type="project" value="UniProtKB-KW"/>
</dbReference>
<dbReference type="GO" id="GO:0016818">
    <property type="term" value="F:hydrolase activity, acting on acid anhydrides, in phosphorus-containing anhydrides"/>
    <property type="evidence" value="ECO:0007669"/>
    <property type="project" value="InterPro"/>
</dbReference>
<dbReference type="GO" id="GO:0008270">
    <property type="term" value="F:zinc ion binding"/>
    <property type="evidence" value="ECO:0007669"/>
    <property type="project" value="UniProtKB-KW"/>
</dbReference>
<dbReference type="GO" id="GO:0006281">
    <property type="term" value="P:DNA repair"/>
    <property type="evidence" value="ECO:0000318"/>
    <property type="project" value="GO_Central"/>
</dbReference>
<dbReference type="CDD" id="cd18008">
    <property type="entry name" value="DEXDc_SHPRH-like"/>
    <property type="match status" value="1"/>
</dbReference>
<dbReference type="CDD" id="cd18793">
    <property type="entry name" value="SF2_C_SNF"/>
    <property type="match status" value="1"/>
</dbReference>
<dbReference type="Gene3D" id="3.40.50.300">
    <property type="entry name" value="P-loop containing nucleotide triphosphate hydrolases"/>
    <property type="match status" value="2"/>
</dbReference>
<dbReference type="Gene3D" id="3.40.50.10810">
    <property type="entry name" value="Tandem AAA-ATPase domain"/>
    <property type="match status" value="1"/>
</dbReference>
<dbReference type="Gene3D" id="3.30.40.10">
    <property type="entry name" value="Zinc/RING finger domain, C3HC4 (zinc finger)"/>
    <property type="match status" value="1"/>
</dbReference>
<dbReference type="InterPro" id="IPR014001">
    <property type="entry name" value="Helicase_ATP-bd"/>
</dbReference>
<dbReference type="InterPro" id="IPR001650">
    <property type="entry name" value="Helicase_C-like"/>
</dbReference>
<dbReference type="InterPro" id="IPR014905">
    <property type="entry name" value="HIRAN"/>
</dbReference>
<dbReference type="InterPro" id="IPR027417">
    <property type="entry name" value="P-loop_NTPase"/>
</dbReference>
<dbReference type="InterPro" id="IPR038718">
    <property type="entry name" value="SNF2-like_sf"/>
</dbReference>
<dbReference type="InterPro" id="IPR049730">
    <property type="entry name" value="SNF2/RAD54-like_C"/>
</dbReference>
<dbReference type="InterPro" id="IPR000330">
    <property type="entry name" value="SNF2_N"/>
</dbReference>
<dbReference type="InterPro" id="IPR050628">
    <property type="entry name" value="SNF2_RAD54_helicase_TF"/>
</dbReference>
<dbReference type="InterPro" id="IPR001841">
    <property type="entry name" value="Znf_RING"/>
</dbReference>
<dbReference type="InterPro" id="IPR013083">
    <property type="entry name" value="Znf_RING/FYVE/PHD"/>
</dbReference>
<dbReference type="PANTHER" id="PTHR45626:SF22">
    <property type="entry name" value="DNA REPAIR PROTEIN RAD5"/>
    <property type="match status" value="1"/>
</dbReference>
<dbReference type="PANTHER" id="PTHR45626">
    <property type="entry name" value="TRANSCRIPTION TERMINATION FACTOR 2-RELATED"/>
    <property type="match status" value="1"/>
</dbReference>
<dbReference type="Pfam" id="PF00271">
    <property type="entry name" value="Helicase_C"/>
    <property type="match status" value="1"/>
</dbReference>
<dbReference type="Pfam" id="PF08797">
    <property type="entry name" value="HIRAN"/>
    <property type="match status" value="1"/>
</dbReference>
<dbReference type="Pfam" id="PF00176">
    <property type="entry name" value="SNF2-rel_dom"/>
    <property type="match status" value="1"/>
</dbReference>
<dbReference type="SMART" id="SM00487">
    <property type="entry name" value="DEXDc"/>
    <property type="match status" value="1"/>
</dbReference>
<dbReference type="SMART" id="SM00490">
    <property type="entry name" value="HELICc"/>
    <property type="match status" value="1"/>
</dbReference>
<dbReference type="SMART" id="SM00910">
    <property type="entry name" value="HIRAN"/>
    <property type="match status" value="1"/>
</dbReference>
<dbReference type="SUPFAM" id="SSF52540">
    <property type="entry name" value="P-loop containing nucleoside triphosphate hydrolases"/>
    <property type="match status" value="2"/>
</dbReference>
<dbReference type="SUPFAM" id="SSF57850">
    <property type="entry name" value="RING/U-box"/>
    <property type="match status" value="1"/>
</dbReference>
<dbReference type="PROSITE" id="PS51192">
    <property type="entry name" value="HELICASE_ATP_BIND_1"/>
    <property type="match status" value="1"/>
</dbReference>
<dbReference type="PROSITE" id="PS51194">
    <property type="entry name" value="HELICASE_CTER"/>
    <property type="match status" value="1"/>
</dbReference>
<dbReference type="PROSITE" id="PS50089">
    <property type="entry name" value="ZF_RING_2"/>
    <property type="match status" value="1"/>
</dbReference>
<gene>
    <name type="primary">RAD5</name>
    <name type="ordered locus">YALI0F05698g</name>
</gene>
<reference key="1">
    <citation type="journal article" date="2004" name="Nature">
        <title>Genome evolution in yeasts.</title>
        <authorList>
            <person name="Dujon B."/>
            <person name="Sherman D."/>
            <person name="Fischer G."/>
            <person name="Durrens P."/>
            <person name="Casaregola S."/>
            <person name="Lafontaine I."/>
            <person name="de Montigny J."/>
            <person name="Marck C."/>
            <person name="Neuveglise C."/>
            <person name="Talla E."/>
            <person name="Goffard N."/>
            <person name="Frangeul L."/>
            <person name="Aigle M."/>
            <person name="Anthouard V."/>
            <person name="Babour A."/>
            <person name="Barbe V."/>
            <person name="Barnay S."/>
            <person name="Blanchin S."/>
            <person name="Beckerich J.-M."/>
            <person name="Beyne E."/>
            <person name="Bleykasten C."/>
            <person name="Boisrame A."/>
            <person name="Boyer J."/>
            <person name="Cattolico L."/>
            <person name="Confanioleri F."/>
            <person name="de Daruvar A."/>
            <person name="Despons L."/>
            <person name="Fabre E."/>
            <person name="Fairhead C."/>
            <person name="Ferry-Dumazet H."/>
            <person name="Groppi A."/>
            <person name="Hantraye F."/>
            <person name="Hennequin C."/>
            <person name="Jauniaux N."/>
            <person name="Joyet P."/>
            <person name="Kachouri R."/>
            <person name="Kerrest A."/>
            <person name="Koszul R."/>
            <person name="Lemaire M."/>
            <person name="Lesur I."/>
            <person name="Ma L."/>
            <person name="Muller H."/>
            <person name="Nicaud J.-M."/>
            <person name="Nikolski M."/>
            <person name="Oztas S."/>
            <person name="Ozier-Kalogeropoulos O."/>
            <person name="Pellenz S."/>
            <person name="Potier S."/>
            <person name="Richard G.-F."/>
            <person name="Straub M.-L."/>
            <person name="Suleau A."/>
            <person name="Swennen D."/>
            <person name="Tekaia F."/>
            <person name="Wesolowski-Louvel M."/>
            <person name="Westhof E."/>
            <person name="Wirth B."/>
            <person name="Zeniou-Meyer M."/>
            <person name="Zivanovic Y."/>
            <person name="Bolotin-Fukuhara M."/>
            <person name="Thierry A."/>
            <person name="Bouchier C."/>
            <person name="Caudron B."/>
            <person name="Scarpelli C."/>
            <person name="Gaillardin C."/>
            <person name="Weissenbach J."/>
            <person name="Wincker P."/>
            <person name="Souciet J.-L."/>
        </authorList>
    </citation>
    <scope>NUCLEOTIDE SEQUENCE [LARGE SCALE GENOMIC DNA]</scope>
    <source>
        <strain>CLIB 122 / E 150</strain>
    </source>
</reference>
<sequence length="1025" mass="115535">MEPRQKKARFFDSEEDFGPDTKSLIRPGSSHKPGKPASNSLARPTPAPSTFRSDLEAFLGPLSDQRFGLLLAKSKGNVEQAVNIHFDLPEEVQQATSEETAEEAEVSQTTTSGFETTQKPSQNTQVPSRVHTRGGCSTSRFIGSLVVTAWASKSSKGKVKYQDRLVVERQSHDHSKSIRKNPTDNSHVHIRTVSGELLGRISGEHDYSIASLIDSRVCDFEASCVYADHNLSLGSNFVVELKCYLTEEAFQDVAMPLLDSKTAKKREYVFDNSRESHVEKMLRNRQIAIVDLFGKLNLIKENEANADMVKDMLRAKSQPPSSQPPSQNSEDESEPIPTDELDALYKRIEKEDVEQPETEVEGFPLELRRYQKQGLTWMISRETEVSEYFDNDDSGPINPLWTKVDFPGSDEKFYVNFSSGALTLKFPKQERSFSGGILADEMGLGKTISTLAMVYRDRHVGCTLVVAPMSLLWQWEQECERVGLSTYVYHEKGADIDLDELFKTYSPNILITSYHTLVSHYGQIKALGGGLDRNVISETSSHERPKIFTKHFHRIVLDEAHVIKNRNTVSAKACCLLRATNKWALTGTPIHNRLEDLFSILKFLGAAPWNDFIYWRNFITLPFQEGKIVSALMTVQCILEPIVLRRTKNMKQADGSPLVVLPKKTINIEKVALTDQERVIYSYVLARAQTSLQKSEASEAVGRNYLNILTQILRLRQSCCDPALILRPEAEVPTDEQLQIEENESQLKSMIQQYNDDTQTSACEYSSEIIAQLQDQSAPPECPICAEDVTKLAISKCLHMGCVDCLADNVRFQESKKQTPVCCICRQPAALKDIFEVERTGEDCKDIRLKKLSDRPRSSKLVALVSKLKQLPKDAKSVVFSQFTSYLDIIQTELRREKIQAFRFDGTLSRQQRTDVLKAFGLSKGSVLLISLKTGGVGLNLVTANHAFIMDPWWTFAQEAQAIDRIHRMGQTKDVHVTRFIVENSVEEKMLKIQQQKMVLAGTLGMSEQEQKAQRIENIKTLLGE</sequence>
<protein>
    <recommendedName>
        <fullName>DNA repair protein RAD5</fullName>
        <ecNumber>3.6.4.-</ecNumber>
    </recommendedName>
</protein>